<evidence type="ECO:0000255" key="1">
    <source>
        <dbReference type="HAMAP-Rule" id="MF_01554"/>
    </source>
</evidence>
<protein>
    <recommendedName>
        <fullName evidence="1">Phosphoglucosamine mutase</fullName>
        <ecNumber evidence="1">5.4.2.10</ecNumber>
    </recommendedName>
</protein>
<dbReference type="EC" id="5.4.2.10" evidence="1"/>
<dbReference type="EMBL" id="BA000012">
    <property type="protein sequence ID" value="BAB50676.1"/>
    <property type="molecule type" value="Genomic_DNA"/>
</dbReference>
<dbReference type="RefSeq" id="WP_010912019.1">
    <property type="nucleotide sequence ID" value="NC_002678.2"/>
</dbReference>
<dbReference type="SMR" id="Q98F91"/>
<dbReference type="KEGG" id="mlo:mll3879"/>
<dbReference type="PATRIC" id="fig|266835.9.peg.3087"/>
<dbReference type="eggNOG" id="COG1109">
    <property type="taxonomic scope" value="Bacteria"/>
</dbReference>
<dbReference type="HOGENOM" id="CLU_016950_7_0_5"/>
<dbReference type="Proteomes" id="UP000000552">
    <property type="component" value="Chromosome"/>
</dbReference>
<dbReference type="GO" id="GO:0005829">
    <property type="term" value="C:cytosol"/>
    <property type="evidence" value="ECO:0007669"/>
    <property type="project" value="TreeGrafter"/>
</dbReference>
<dbReference type="GO" id="GO:0000287">
    <property type="term" value="F:magnesium ion binding"/>
    <property type="evidence" value="ECO:0007669"/>
    <property type="project" value="UniProtKB-UniRule"/>
</dbReference>
<dbReference type="GO" id="GO:0008966">
    <property type="term" value="F:phosphoglucosamine mutase activity"/>
    <property type="evidence" value="ECO:0007669"/>
    <property type="project" value="UniProtKB-UniRule"/>
</dbReference>
<dbReference type="GO" id="GO:0004615">
    <property type="term" value="F:phosphomannomutase activity"/>
    <property type="evidence" value="ECO:0007669"/>
    <property type="project" value="TreeGrafter"/>
</dbReference>
<dbReference type="GO" id="GO:0005975">
    <property type="term" value="P:carbohydrate metabolic process"/>
    <property type="evidence" value="ECO:0007669"/>
    <property type="project" value="InterPro"/>
</dbReference>
<dbReference type="GO" id="GO:0009252">
    <property type="term" value="P:peptidoglycan biosynthetic process"/>
    <property type="evidence" value="ECO:0007669"/>
    <property type="project" value="TreeGrafter"/>
</dbReference>
<dbReference type="GO" id="GO:0006048">
    <property type="term" value="P:UDP-N-acetylglucosamine biosynthetic process"/>
    <property type="evidence" value="ECO:0007669"/>
    <property type="project" value="TreeGrafter"/>
</dbReference>
<dbReference type="CDD" id="cd05802">
    <property type="entry name" value="GlmM"/>
    <property type="match status" value="1"/>
</dbReference>
<dbReference type="FunFam" id="3.30.310.50:FF:000001">
    <property type="entry name" value="Phosphoglucosamine mutase"/>
    <property type="match status" value="1"/>
</dbReference>
<dbReference type="FunFam" id="3.40.120.10:FF:000001">
    <property type="entry name" value="Phosphoglucosamine mutase"/>
    <property type="match status" value="1"/>
</dbReference>
<dbReference type="FunFam" id="3.40.120.10:FF:000003">
    <property type="entry name" value="Phosphoglucosamine mutase"/>
    <property type="match status" value="1"/>
</dbReference>
<dbReference type="Gene3D" id="3.40.120.10">
    <property type="entry name" value="Alpha-D-Glucose-1,6-Bisphosphate, subunit A, domain 3"/>
    <property type="match status" value="3"/>
</dbReference>
<dbReference type="Gene3D" id="3.30.310.50">
    <property type="entry name" value="Alpha-D-phosphohexomutase, C-terminal domain"/>
    <property type="match status" value="1"/>
</dbReference>
<dbReference type="HAMAP" id="MF_01554_B">
    <property type="entry name" value="GlmM_B"/>
    <property type="match status" value="1"/>
</dbReference>
<dbReference type="InterPro" id="IPR005844">
    <property type="entry name" value="A-D-PHexomutase_a/b/a-I"/>
</dbReference>
<dbReference type="InterPro" id="IPR016055">
    <property type="entry name" value="A-D-PHexomutase_a/b/a-I/II/III"/>
</dbReference>
<dbReference type="InterPro" id="IPR005845">
    <property type="entry name" value="A-D-PHexomutase_a/b/a-II"/>
</dbReference>
<dbReference type="InterPro" id="IPR005846">
    <property type="entry name" value="A-D-PHexomutase_a/b/a-III"/>
</dbReference>
<dbReference type="InterPro" id="IPR005843">
    <property type="entry name" value="A-D-PHexomutase_C"/>
</dbReference>
<dbReference type="InterPro" id="IPR036900">
    <property type="entry name" value="A-D-PHexomutase_C_sf"/>
</dbReference>
<dbReference type="InterPro" id="IPR016066">
    <property type="entry name" value="A-D-PHexomutase_CS"/>
</dbReference>
<dbReference type="InterPro" id="IPR005841">
    <property type="entry name" value="Alpha-D-phosphohexomutase_SF"/>
</dbReference>
<dbReference type="InterPro" id="IPR006352">
    <property type="entry name" value="GlmM_bact"/>
</dbReference>
<dbReference type="InterPro" id="IPR050060">
    <property type="entry name" value="Phosphoglucosamine_mutase"/>
</dbReference>
<dbReference type="NCBIfam" id="TIGR01455">
    <property type="entry name" value="glmM"/>
    <property type="match status" value="1"/>
</dbReference>
<dbReference type="NCBIfam" id="NF008139">
    <property type="entry name" value="PRK10887.1"/>
    <property type="match status" value="1"/>
</dbReference>
<dbReference type="PANTHER" id="PTHR42946:SF1">
    <property type="entry name" value="PHOSPHOGLUCOMUTASE (ALPHA-D-GLUCOSE-1,6-BISPHOSPHATE-DEPENDENT)"/>
    <property type="match status" value="1"/>
</dbReference>
<dbReference type="PANTHER" id="PTHR42946">
    <property type="entry name" value="PHOSPHOHEXOSE MUTASE"/>
    <property type="match status" value="1"/>
</dbReference>
<dbReference type="Pfam" id="PF02878">
    <property type="entry name" value="PGM_PMM_I"/>
    <property type="match status" value="1"/>
</dbReference>
<dbReference type="Pfam" id="PF02879">
    <property type="entry name" value="PGM_PMM_II"/>
    <property type="match status" value="1"/>
</dbReference>
<dbReference type="Pfam" id="PF02880">
    <property type="entry name" value="PGM_PMM_III"/>
    <property type="match status" value="1"/>
</dbReference>
<dbReference type="Pfam" id="PF00408">
    <property type="entry name" value="PGM_PMM_IV"/>
    <property type="match status" value="1"/>
</dbReference>
<dbReference type="PRINTS" id="PR00509">
    <property type="entry name" value="PGMPMM"/>
</dbReference>
<dbReference type="SUPFAM" id="SSF55957">
    <property type="entry name" value="Phosphoglucomutase, C-terminal domain"/>
    <property type="match status" value="1"/>
</dbReference>
<dbReference type="SUPFAM" id="SSF53738">
    <property type="entry name" value="Phosphoglucomutase, first 3 domains"/>
    <property type="match status" value="3"/>
</dbReference>
<dbReference type="PROSITE" id="PS00710">
    <property type="entry name" value="PGM_PMM"/>
    <property type="match status" value="1"/>
</dbReference>
<reference key="1">
    <citation type="journal article" date="2000" name="DNA Res.">
        <title>Complete genome structure of the nitrogen-fixing symbiotic bacterium Mesorhizobium loti.</title>
        <authorList>
            <person name="Kaneko T."/>
            <person name="Nakamura Y."/>
            <person name="Sato S."/>
            <person name="Asamizu E."/>
            <person name="Kato T."/>
            <person name="Sasamoto S."/>
            <person name="Watanabe A."/>
            <person name="Idesawa K."/>
            <person name="Ishikawa A."/>
            <person name="Kawashima K."/>
            <person name="Kimura T."/>
            <person name="Kishida Y."/>
            <person name="Kiyokawa C."/>
            <person name="Kohara M."/>
            <person name="Matsumoto M."/>
            <person name="Matsuno A."/>
            <person name="Mochizuki Y."/>
            <person name="Nakayama S."/>
            <person name="Nakazaki N."/>
            <person name="Shimpo S."/>
            <person name="Sugimoto M."/>
            <person name="Takeuchi C."/>
            <person name="Yamada M."/>
            <person name="Tabata S."/>
        </authorList>
    </citation>
    <scope>NUCLEOTIDE SEQUENCE [LARGE SCALE GENOMIC DNA]</scope>
    <source>
        <strain>LMG 29417 / CECT 9101 / MAFF 303099</strain>
    </source>
</reference>
<sequence length="450" mass="48347">MAGNYFGTDGIRGRANKFPMTAEIAMRVGMAAGLSFQRGSHRHRVVLGKDTRLSGYMIENAMVAGLCAAGMDVFLLGPIPTPAVAMLVRSLRADIGVMISASHNPYYDNGIKLFGPDGYKLSDEIEERIESMLDKDVELTLADSDGLGRAKRVDGVHDRYIEFAKRTLPRSMSLSGLRIVVDCANGAAYKVAPEALWELGAEVVAINIEPNGFNINKECGSTHPAGLQKKVHEVRADIGIALDGDADRVVIVDENGAIVDGDQIMAMIAESWHQSGRLAGGGVVSTVMSNLGLERFLGDMKLQLHRTKVGDRYVVEHMRAHGLNVGGEQSGHIVLSDFSTTGDGLVSALQVLACIKRQGRPVSELSKKFEPVPQLLKNVRIAGGKPLEEAPVKAAIEDARNRLGKAGRLVIRPSGTEPLIRVMAEGDDPQLVEAVVNDIVEVISETRSAA</sequence>
<proteinExistence type="inferred from homology"/>
<organism>
    <name type="scientific">Mesorhizobium japonicum (strain LMG 29417 / CECT 9101 / MAFF 303099)</name>
    <name type="common">Mesorhizobium loti (strain MAFF 303099)</name>
    <dbReference type="NCBI Taxonomy" id="266835"/>
    <lineage>
        <taxon>Bacteria</taxon>
        <taxon>Pseudomonadati</taxon>
        <taxon>Pseudomonadota</taxon>
        <taxon>Alphaproteobacteria</taxon>
        <taxon>Hyphomicrobiales</taxon>
        <taxon>Phyllobacteriaceae</taxon>
        <taxon>Mesorhizobium</taxon>
    </lineage>
</organism>
<accession>Q98F91</accession>
<gene>
    <name evidence="1" type="primary">glmM</name>
    <name type="ordered locus">mll3879</name>
</gene>
<name>GLMM_RHILO</name>
<feature type="chain" id="PRO_0000147947" description="Phosphoglucosamine mutase">
    <location>
        <begin position="1"/>
        <end position="450"/>
    </location>
</feature>
<feature type="active site" description="Phosphoserine intermediate" evidence="1">
    <location>
        <position position="102"/>
    </location>
</feature>
<feature type="binding site" description="via phosphate group" evidence="1">
    <location>
        <position position="102"/>
    </location>
    <ligand>
        <name>Mg(2+)</name>
        <dbReference type="ChEBI" id="CHEBI:18420"/>
    </ligand>
</feature>
<feature type="binding site" evidence="1">
    <location>
        <position position="243"/>
    </location>
    <ligand>
        <name>Mg(2+)</name>
        <dbReference type="ChEBI" id="CHEBI:18420"/>
    </ligand>
</feature>
<feature type="binding site" evidence="1">
    <location>
        <position position="245"/>
    </location>
    <ligand>
        <name>Mg(2+)</name>
        <dbReference type="ChEBI" id="CHEBI:18420"/>
    </ligand>
</feature>
<feature type="binding site" evidence="1">
    <location>
        <position position="247"/>
    </location>
    <ligand>
        <name>Mg(2+)</name>
        <dbReference type="ChEBI" id="CHEBI:18420"/>
    </ligand>
</feature>
<feature type="modified residue" description="Phosphoserine" evidence="1">
    <location>
        <position position="102"/>
    </location>
</feature>
<keyword id="KW-0413">Isomerase</keyword>
<keyword id="KW-0460">Magnesium</keyword>
<keyword id="KW-0479">Metal-binding</keyword>
<keyword id="KW-0597">Phosphoprotein</keyword>
<comment type="function">
    <text evidence="1">Catalyzes the conversion of glucosamine-6-phosphate to glucosamine-1-phosphate.</text>
</comment>
<comment type="catalytic activity">
    <reaction evidence="1">
        <text>alpha-D-glucosamine 1-phosphate = D-glucosamine 6-phosphate</text>
        <dbReference type="Rhea" id="RHEA:23424"/>
        <dbReference type="ChEBI" id="CHEBI:58516"/>
        <dbReference type="ChEBI" id="CHEBI:58725"/>
        <dbReference type="EC" id="5.4.2.10"/>
    </reaction>
</comment>
<comment type="cofactor">
    <cofactor evidence="1">
        <name>Mg(2+)</name>
        <dbReference type="ChEBI" id="CHEBI:18420"/>
    </cofactor>
    <text evidence="1">Binds 1 Mg(2+) ion per subunit.</text>
</comment>
<comment type="PTM">
    <text evidence="1">Activated by phosphorylation.</text>
</comment>
<comment type="similarity">
    <text evidence="1">Belongs to the phosphohexose mutase family.</text>
</comment>